<sequence length="109" mass="12683">MAVCIAVIAKENYPLYIRSTPTENKLKFHYMVHTSLDVVDEKISAMGKALVDQRELYLGLLYPTEDYKMFRKLHNSYTDVMCNPFYNPGDRIQSRAFDNMVTSMMIQVC</sequence>
<feature type="chain" id="PRO_0000294453" description="Trafficking protein particle complex subunit 2-like protein">
    <location>
        <begin position="1"/>
        <end position="109"/>
    </location>
</feature>
<reference key="1">
    <citation type="submission" date="2004-11" db="EMBL/GenBank/DDBJ databases">
        <authorList>
            <consortium name="The German cDNA consortium"/>
        </authorList>
    </citation>
    <scope>NUCLEOTIDE SEQUENCE [LARGE SCALE MRNA]</scope>
    <source>
        <tissue>Kidney</tissue>
    </source>
</reference>
<name>TPC2L_PONAB</name>
<comment type="function">
    <text evidence="1">May play a role in vesicular transport from endoplasmic reticulum to Golgi.</text>
</comment>
<comment type="subunit">
    <text evidence="1">Component of the multisubunit TRAPP (transport protein particle) complex, which includes at least TRAPPC2, TRAPPC2L, TRAPPC3, TRAPPC3L, TRAPPC4, TRAPPC5, TRAPPC8, TRAPPC9, TRAPPC10, TRAPPC11 and TRAPPC12. Interacts with the heterodimer TRAPPC3-TRAPPC6A (By similarity).</text>
</comment>
<comment type="subcellular location">
    <subcellularLocation>
        <location evidence="1">Cytoplasm</location>
        <location evidence="1">Perinuclear region</location>
    </subcellularLocation>
    <subcellularLocation>
        <location evidence="1">Endoplasmic reticulum</location>
    </subcellularLocation>
    <subcellularLocation>
        <location evidence="1">Golgi apparatus</location>
    </subcellularLocation>
</comment>
<comment type="similarity">
    <text evidence="2">Belongs to the TRAPP small subunits family. Sedlin subfamily.</text>
</comment>
<organism>
    <name type="scientific">Pongo abelii</name>
    <name type="common">Sumatran orangutan</name>
    <name type="synonym">Pongo pygmaeus abelii</name>
    <dbReference type="NCBI Taxonomy" id="9601"/>
    <lineage>
        <taxon>Eukaryota</taxon>
        <taxon>Metazoa</taxon>
        <taxon>Chordata</taxon>
        <taxon>Craniata</taxon>
        <taxon>Vertebrata</taxon>
        <taxon>Euteleostomi</taxon>
        <taxon>Mammalia</taxon>
        <taxon>Eutheria</taxon>
        <taxon>Euarchontoglires</taxon>
        <taxon>Primates</taxon>
        <taxon>Haplorrhini</taxon>
        <taxon>Catarrhini</taxon>
        <taxon>Hominidae</taxon>
        <taxon>Pongo</taxon>
    </lineage>
</organism>
<evidence type="ECO:0000250" key="1"/>
<evidence type="ECO:0000305" key="2"/>
<proteinExistence type="inferred from homology"/>
<accession>Q5RBK9</accession>
<keyword id="KW-0963">Cytoplasm</keyword>
<keyword id="KW-0256">Endoplasmic reticulum</keyword>
<keyword id="KW-0931">ER-Golgi transport</keyword>
<keyword id="KW-0333">Golgi apparatus</keyword>
<keyword id="KW-1185">Reference proteome</keyword>
<keyword id="KW-0813">Transport</keyword>
<protein>
    <recommendedName>
        <fullName>Trafficking protein particle complex subunit 2-like protein</fullName>
    </recommendedName>
</protein>
<gene>
    <name type="primary">TRAPPC2L</name>
</gene>
<dbReference type="EMBL" id="CR858631">
    <property type="protein sequence ID" value="CAH90851.1"/>
    <property type="molecule type" value="mRNA"/>
</dbReference>
<dbReference type="RefSeq" id="NP_001125486.1">
    <property type="nucleotide sequence ID" value="NM_001132014.1"/>
</dbReference>
<dbReference type="SMR" id="Q5RBK9"/>
<dbReference type="STRING" id="9601.ENSPPYP00000008629"/>
<dbReference type="GeneID" id="100172395"/>
<dbReference type="KEGG" id="pon:100172395"/>
<dbReference type="CTD" id="51693"/>
<dbReference type="InParanoid" id="Q5RBK9"/>
<dbReference type="OrthoDB" id="10258445at2759"/>
<dbReference type="Proteomes" id="UP000001595">
    <property type="component" value="Unplaced"/>
</dbReference>
<dbReference type="GO" id="GO:0005783">
    <property type="term" value="C:endoplasmic reticulum"/>
    <property type="evidence" value="ECO:0007669"/>
    <property type="project" value="UniProtKB-SubCell"/>
</dbReference>
<dbReference type="GO" id="GO:0005794">
    <property type="term" value="C:Golgi apparatus"/>
    <property type="evidence" value="ECO:0007669"/>
    <property type="project" value="UniProtKB-SubCell"/>
</dbReference>
<dbReference type="GO" id="GO:0048471">
    <property type="term" value="C:perinuclear region of cytoplasm"/>
    <property type="evidence" value="ECO:0007669"/>
    <property type="project" value="UniProtKB-SubCell"/>
</dbReference>
<dbReference type="GO" id="GO:0006888">
    <property type="term" value="P:endoplasmic reticulum to Golgi vesicle-mediated transport"/>
    <property type="evidence" value="ECO:0007669"/>
    <property type="project" value="InterPro"/>
</dbReference>
<dbReference type="CDD" id="cd14854">
    <property type="entry name" value="TRAPPC2L"/>
    <property type="match status" value="1"/>
</dbReference>
<dbReference type="FunFam" id="3.30.450.70:FF:000008">
    <property type="entry name" value="Trafficking protein particle complex 2 like"/>
    <property type="match status" value="1"/>
</dbReference>
<dbReference type="FunFam" id="3.30.450.70:FF:000016">
    <property type="entry name" value="Trafficking protein particle complex 2 like"/>
    <property type="match status" value="1"/>
</dbReference>
<dbReference type="Gene3D" id="3.30.450.70">
    <property type="match status" value="2"/>
</dbReference>
<dbReference type="InterPro" id="IPR011012">
    <property type="entry name" value="Longin-like_dom_sf"/>
</dbReference>
<dbReference type="InterPro" id="IPR006722">
    <property type="entry name" value="Sedlin"/>
</dbReference>
<dbReference type="InterPro" id="IPR044760">
    <property type="entry name" value="TRAPPC2L"/>
</dbReference>
<dbReference type="PANTHER" id="PTHR12403">
    <property type="entry name" value="TRAFFICKING PROTEIN PARTICLE COMPLEX SUBUNIT 2"/>
    <property type="match status" value="1"/>
</dbReference>
<dbReference type="Pfam" id="PF04628">
    <property type="entry name" value="Sedlin_N"/>
    <property type="match status" value="1"/>
</dbReference>
<dbReference type="SUPFAM" id="SSF64356">
    <property type="entry name" value="SNARE-like"/>
    <property type="match status" value="1"/>
</dbReference>